<name>RF1_BURCJ</name>
<protein>
    <recommendedName>
        <fullName evidence="1">Peptide chain release factor 1</fullName>
        <shortName evidence="1">RF-1</shortName>
    </recommendedName>
</protein>
<dbReference type="EMBL" id="AM747720">
    <property type="protein sequence ID" value="CAR50684.1"/>
    <property type="molecule type" value="Genomic_DNA"/>
</dbReference>
<dbReference type="RefSeq" id="WP_006494405.1">
    <property type="nucleotide sequence ID" value="NC_011000.1"/>
</dbReference>
<dbReference type="SMR" id="B4E6U6"/>
<dbReference type="GeneID" id="56556945"/>
<dbReference type="KEGG" id="bcj:BCAL0374"/>
<dbReference type="eggNOG" id="COG0216">
    <property type="taxonomic scope" value="Bacteria"/>
</dbReference>
<dbReference type="HOGENOM" id="CLU_036856_0_1_4"/>
<dbReference type="BioCyc" id="BCEN216591:G1G1V-423-MONOMER"/>
<dbReference type="Proteomes" id="UP000001035">
    <property type="component" value="Chromosome 1"/>
</dbReference>
<dbReference type="GO" id="GO:0005737">
    <property type="term" value="C:cytoplasm"/>
    <property type="evidence" value="ECO:0007669"/>
    <property type="project" value="UniProtKB-SubCell"/>
</dbReference>
<dbReference type="GO" id="GO:0016149">
    <property type="term" value="F:translation release factor activity, codon specific"/>
    <property type="evidence" value="ECO:0007669"/>
    <property type="project" value="UniProtKB-UniRule"/>
</dbReference>
<dbReference type="FunFam" id="3.30.160.20:FF:000004">
    <property type="entry name" value="Peptide chain release factor 1"/>
    <property type="match status" value="1"/>
</dbReference>
<dbReference type="FunFam" id="3.30.70.1660:FF:000002">
    <property type="entry name" value="Peptide chain release factor 1"/>
    <property type="match status" value="1"/>
</dbReference>
<dbReference type="FunFam" id="3.30.70.1660:FF:000004">
    <property type="entry name" value="Peptide chain release factor 1"/>
    <property type="match status" value="1"/>
</dbReference>
<dbReference type="Gene3D" id="3.30.160.20">
    <property type="match status" value="1"/>
</dbReference>
<dbReference type="Gene3D" id="3.30.70.1660">
    <property type="match status" value="2"/>
</dbReference>
<dbReference type="Gene3D" id="6.10.140.1950">
    <property type="match status" value="1"/>
</dbReference>
<dbReference type="HAMAP" id="MF_00093">
    <property type="entry name" value="Rel_fac_1"/>
    <property type="match status" value="1"/>
</dbReference>
<dbReference type="InterPro" id="IPR005139">
    <property type="entry name" value="PCRF"/>
</dbReference>
<dbReference type="InterPro" id="IPR000352">
    <property type="entry name" value="Pep_chain_release_fac_I"/>
</dbReference>
<dbReference type="InterPro" id="IPR045853">
    <property type="entry name" value="Pep_chain_release_fac_I_sf"/>
</dbReference>
<dbReference type="InterPro" id="IPR050057">
    <property type="entry name" value="Prokaryotic/Mito_RF"/>
</dbReference>
<dbReference type="InterPro" id="IPR004373">
    <property type="entry name" value="RF-1"/>
</dbReference>
<dbReference type="NCBIfam" id="TIGR00019">
    <property type="entry name" value="prfA"/>
    <property type="match status" value="1"/>
</dbReference>
<dbReference type="NCBIfam" id="NF001859">
    <property type="entry name" value="PRK00591.1"/>
    <property type="match status" value="1"/>
</dbReference>
<dbReference type="PANTHER" id="PTHR43804">
    <property type="entry name" value="LD18447P"/>
    <property type="match status" value="1"/>
</dbReference>
<dbReference type="PANTHER" id="PTHR43804:SF7">
    <property type="entry name" value="LD18447P"/>
    <property type="match status" value="1"/>
</dbReference>
<dbReference type="Pfam" id="PF03462">
    <property type="entry name" value="PCRF"/>
    <property type="match status" value="1"/>
</dbReference>
<dbReference type="Pfam" id="PF00472">
    <property type="entry name" value="RF-1"/>
    <property type="match status" value="1"/>
</dbReference>
<dbReference type="SMART" id="SM00937">
    <property type="entry name" value="PCRF"/>
    <property type="match status" value="1"/>
</dbReference>
<dbReference type="SUPFAM" id="SSF75620">
    <property type="entry name" value="Release factor"/>
    <property type="match status" value="1"/>
</dbReference>
<dbReference type="PROSITE" id="PS00745">
    <property type="entry name" value="RF_PROK_I"/>
    <property type="match status" value="1"/>
</dbReference>
<sequence length="360" mass="40499">MKTSMQRKLDQLSTRLAELNDLLSRENVTADLDQYRKLTREHAELGPVVEQYALWRQSRSDEAAAQELLADPSMRDFAEDEIRSAREGMARLETELQKMLLPKDPNDDRNIFLEIRAGTGGDESALFAGDLLRMYLRFAERQRWQVEMMSESASDLGGYKEVIVRIAGQGAYSRLKFESGGHRVQRVPATETQGRIHTSACTVAVMPEADEIGEVEINPADLRIDTFRASGAGGQHINKTDSAVRVTHIPTGIVVECQDDRSQHKNKDRALKVLAARIKDKQYHEQHAKEAATRKSLIGSGDRSERIRTYNFPQGRMTDHRINLTLYRLEAIMDGDLDELIGALVTEHQAELLASLGEAD</sequence>
<reference key="1">
    <citation type="journal article" date="2009" name="J. Bacteriol.">
        <title>The genome of Burkholderia cenocepacia J2315, an epidemic pathogen of cystic fibrosis patients.</title>
        <authorList>
            <person name="Holden M.T."/>
            <person name="Seth-Smith H.M."/>
            <person name="Crossman L.C."/>
            <person name="Sebaihia M."/>
            <person name="Bentley S.D."/>
            <person name="Cerdeno-Tarraga A.M."/>
            <person name="Thomson N.R."/>
            <person name="Bason N."/>
            <person name="Quail M.A."/>
            <person name="Sharp S."/>
            <person name="Cherevach I."/>
            <person name="Churcher C."/>
            <person name="Goodhead I."/>
            <person name="Hauser H."/>
            <person name="Holroyd N."/>
            <person name="Mungall K."/>
            <person name="Scott P."/>
            <person name="Walker D."/>
            <person name="White B."/>
            <person name="Rose H."/>
            <person name="Iversen P."/>
            <person name="Mil-Homens D."/>
            <person name="Rocha E.P."/>
            <person name="Fialho A.M."/>
            <person name="Baldwin A."/>
            <person name="Dowson C."/>
            <person name="Barrell B.G."/>
            <person name="Govan J.R."/>
            <person name="Vandamme P."/>
            <person name="Hart C.A."/>
            <person name="Mahenthiralingam E."/>
            <person name="Parkhill J."/>
        </authorList>
    </citation>
    <scope>NUCLEOTIDE SEQUENCE [LARGE SCALE GENOMIC DNA]</scope>
    <source>
        <strain>ATCC BAA-245 / DSM 16553 / LMG 16656 / NCTC 13227 / J2315 / CF5610</strain>
    </source>
</reference>
<keyword id="KW-0963">Cytoplasm</keyword>
<keyword id="KW-0488">Methylation</keyword>
<keyword id="KW-0648">Protein biosynthesis</keyword>
<comment type="function">
    <text evidence="1">Peptide chain release factor 1 directs the termination of translation in response to the peptide chain termination codons UAG and UAA.</text>
</comment>
<comment type="subcellular location">
    <subcellularLocation>
        <location evidence="1">Cytoplasm</location>
    </subcellularLocation>
</comment>
<comment type="PTM">
    <text evidence="1">Methylated by PrmC. Methylation increases the termination efficiency of RF1.</text>
</comment>
<comment type="similarity">
    <text evidence="1">Belongs to the prokaryotic/mitochondrial release factor family.</text>
</comment>
<gene>
    <name evidence="1" type="primary">prfA</name>
    <name type="ordered locus">BceJ2315_03750</name>
    <name type="ORF">BCAL0374</name>
</gene>
<feature type="chain" id="PRO_1000093431" description="Peptide chain release factor 1">
    <location>
        <begin position="1"/>
        <end position="360"/>
    </location>
</feature>
<feature type="modified residue" description="N5-methylglutamine" evidence="1">
    <location>
        <position position="235"/>
    </location>
</feature>
<proteinExistence type="inferred from homology"/>
<organism>
    <name type="scientific">Burkholderia cenocepacia (strain ATCC BAA-245 / DSM 16553 / LMG 16656 / NCTC 13227 / J2315 / CF5610)</name>
    <name type="common">Burkholderia cepacia (strain J2315)</name>
    <dbReference type="NCBI Taxonomy" id="216591"/>
    <lineage>
        <taxon>Bacteria</taxon>
        <taxon>Pseudomonadati</taxon>
        <taxon>Pseudomonadota</taxon>
        <taxon>Betaproteobacteria</taxon>
        <taxon>Burkholderiales</taxon>
        <taxon>Burkholderiaceae</taxon>
        <taxon>Burkholderia</taxon>
        <taxon>Burkholderia cepacia complex</taxon>
    </lineage>
</organism>
<accession>B4E6U6</accession>
<evidence type="ECO:0000255" key="1">
    <source>
        <dbReference type="HAMAP-Rule" id="MF_00093"/>
    </source>
</evidence>